<feature type="chain" id="PRO_1000021854" description="Homoserine O-acetyltransferase">
    <location>
        <begin position="1"/>
        <end position="314"/>
    </location>
</feature>
<feature type="active site" description="Acyl-thioester intermediate" evidence="1">
    <location>
        <position position="142"/>
    </location>
</feature>
<feature type="active site" description="Proton acceptor" evidence="1">
    <location>
        <position position="235"/>
    </location>
</feature>
<feature type="active site" evidence="1">
    <location>
        <position position="237"/>
    </location>
</feature>
<feature type="binding site" evidence="1">
    <location>
        <position position="163"/>
    </location>
    <ligand>
        <name>substrate</name>
    </ligand>
</feature>
<feature type="binding site" evidence="1">
    <location>
        <position position="192"/>
    </location>
    <ligand>
        <name>substrate</name>
    </ligand>
</feature>
<feature type="binding site" evidence="1">
    <location>
        <position position="249"/>
    </location>
    <ligand>
        <name>substrate</name>
    </ligand>
</feature>
<feature type="site" description="Important for acyl-CoA specificity" evidence="1">
    <location>
        <position position="111"/>
    </location>
</feature>
<feature type="site" description="Important for substrate specificity" evidence="1">
    <location>
        <position position="192"/>
    </location>
</feature>
<reference key="1">
    <citation type="journal article" date="2004" name="Nat. Biotechnol.">
        <title>Complete sequence and comparative genome analysis of the dairy bacterium Streptococcus thermophilus.</title>
        <authorList>
            <person name="Bolotin A."/>
            <person name="Quinquis B."/>
            <person name="Renault P."/>
            <person name="Sorokin A."/>
            <person name="Ehrlich S.D."/>
            <person name="Kulakauskas S."/>
            <person name="Lapidus A."/>
            <person name="Goltsman E."/>
            <person name="Mazur M."/>
            <person name="Pusch G.D."/>
            <person name="Fonstein M."/>
            <person name="Overbeek R."/>
            <person name="Kyprides N."/>
            <person name="Purnelle B."/>
            <person name="Prozzi D."/>
            <person name="Ngui K."/>
            <person name="Masuy D."/>
            <person name="Hancy F."/>
            <person name="Burteau S."/>
            <person name="Boutry M."/>
            <person name="Delcour J."/>
            <person name="Goffeau A."/>
            <person name="Hols P."/>
        </authorList>
    </citation>
    <scope>NUCLEOTIDE SEQUENCE [LARGE SCALE GENOMIC DNA]</scope>
    <source>
        <strain>ATCC BAA-250 / LMG 18311</strain>
    </source>
</reference>
<name>METAA_STRT2</name>
<keyword id="KW-0012">Acyltransferase</keyword>
<keyword id="KW-0028">Amino-acid biosynthesis</keyword>
<keyword id="KW-0963">Cytoplasm</keyword>
<keyword id="KW-0486">Methionine biosynthesis</keyword>
<keyword id="KW-1185">Reference proteome</keyword>
<keyword id="KW-0808">Transferase</keyword>
<accession>Q5M3Y7</accession>
<gene>
    <name evidence="1" type="primary">metAA</name>
    <name type="ordered locus">stu1222</name>
</gene>
<protein>
    <recommendedName>
        <fullName evidence="1">Homoserine O-acetyltransferase</fullName>
        <shortName evidence="1">HAT</shortName>
        <ecNumber evidence="1">2.3.1.31</ecNumber>
    </recommendedName>
    <alternativeName>
        <fullName evidence="1">Homoserine transacetylase</fullName>
        <shortName evidence="1">HTA</shortName>
    </alternativeName>
</protein>
<evidence type="ECO:0000255" key="1">
    <source>
        <dbReference type="HAMAP-Rule" id="MF_00295"/>
    </source>
</evidence>
<sequence length="314" mass="36631">MPIKLDNKLPALDVLRSKNVFIMDENRASSQDIRPMEVLILNLMPTKEVTETQLLRLLANTPLQINVEFLYMASHKSKNTHAEHMETFYKTFDEIKDKYYDGLIVTGAPVEQMPFEEVDYWQELTRVFDWSKNHVYSTLHLCWGAQAGLYYKHEVDKVPLSEKLSGIYKQTVDMPENFLMNGFDDSFVSPHSRYTEVTLEDIKNKTDLDVVASGQEVGLSILASKDLREVYSFGHFEYDRDTLAREYRRDLEVGINPDVPANYFPGDDPSQEPKLRWNLAASTFFSNWINYAVYQETPYRLEELEDDFSFYGYL</sequence>
<organism>
    <name type="scientific">Streptococcus thermophilus (strain ATCC BAA-250 / LMG 18311)</name>
    <dbReference type="NCBI Taxonomy" id="264199"/>
    <lineage>
        <taxon>Bacteria</taxon>
        <taxon>Bacillati</taxon>
        <taxon>Bacillota</taxon>
        <taxon>Bacilli</taxon>
        <taxon>Lactobacillales</taxon>
        <taxon>Streptococcaceae</taxon>
        <taxon>Streptococcus</taxon>
    </lineage>
</organism>
<proteinExistence type="inferred from homology"/>
<comment type="function">
    <text evidence="1">Transfers an acetyl group from acetyl-CoA to L-homoserine, forming acetyl-L-homoserine.</text>
</comment>
<comment type="catalytic activity">
    <reaction evidence="1">
        <text>L-homoserine + acetyl-CoA = O-acetyl-L-homoserine + CoA</text>
        <dbReference type="Rhea" id="RHEA:13701"/>
        <dbReference type="ChEBI" id="CHEBI:57287"/>
        <dbReference type="ChEBI" id="CHEBI:57288"/>
        <dbReference type="ChEBI" id="CHEBI:57476"/>
        <dbReference type="ChEBI" id="CHEBI:57716"/>
        <dbReference type="EC" id="2.3.1.31"/>
    </reaction>
</comment>
<comment type="pathway">
    <text evidence="1">Amino-acid biosynthesis; L-methionine biosynthesis via de novo pathway; O-acetyl-L-homoserine from L-homoserine: step 1/1.</text>
</comment>
<comment type="subcellular location">
    <subcellularLocation>
        <location evidence="1">Cytoplasm</location>
    </subcellularLocation>
</comment>
<comment type="similarity">
    <text evidence="1">Belongs to the MetA family.</text>
</comment>
<dbReference type="EC" id="2.3.1.31" evidence="1"/>
<dbReference type="EMBL" id="CP000023">
    <property type="protein sequence ID" value="AAV60856.1"/>
    <property type="molecule type" value="Genomic_DNA"/>
</dbReference>
<dbReference type="RefSeq" id="WP_011226132.1">
    <property type="nucleotide sequence ID" value="NC_006448.1"/>
</dbReference>
<dbReference type="SMR" id="Q5M3Y7"/>
<dbReference type="STRING" id="264199.stu1222"/>
<dbReference type="GeneID" id="66899014"/>
<dbReference type="KEGG" id="stl:stu1222"/>
<dbReference type="PATRIC" id="fig|264199.4.peg.1204"/>
<dbReference type="eggNOG" id="COG1897">
    <property type="taxonomic scope" value="Bacteria"/>
</dbReference>
<dbReference type="HOGENOM" id="CLU_057851_0_1_9"/>
<dbReference type="UniPathway" id="UPA00051">
    <property type="reaction ID" value="UER00074"/>
</dbReference>
<dbReference type="Proteomes" id="UP000001170">
    <property type="component" value="Chromosome"/>
</dbReference>
<dbReference type="GO" id="GO:0005737">
    <property type="term" value="C:cytoplasm"/>
    <property type="evidence" value="ECO:0007669"/>
    <property type="project" value="UniProtKB-SubCell"/>
</dbReference>
<dbReference type="GO" id="GO:0004414">
    <property type="term" value="F:homoserine O-acetyltransferase activity"/>
    <property type="evidence" value="ECO:0007669"/>
    <property type="project" value="UniProtKB-EC"/>
</dbReference>
<dbReference type="GO" id="GO:0008899">
    <property type="term" value="F:homoserine O-succinyltransferase activity"/>
    <property type="evidence" value="ECO:0007669"/>
    <property type="project" value="UniProtKB-UniRule"/>
</dbReference>
<dbReference type="GO" id="GO:0019281">
    <property type="term" value="P:L-methionine biosynthetic process from homoserine via O-succinyl-L-homoserine and cystathionine"/>
    <property type="evidence" value="ECO:0007669"/>
    <property type="project" value="InterPro"/>
</dbReference>
<dbReference type="CDD" id="cd03131">
    <property type="entry name" value="GATase1_HTS"/>
    <property type="match status" value="1"/>
</dbReference>
<dbReference type="FunFam" id="3.40.50.880:FF:000004">
    <property type="entry name" value="Homoserine O-succinyltransferase"/>
    <property type="match status" value="1"/>
</dbReference>
<dbReference type="Gene3D" id="3.40.50.880">
    <property type="match status" value="1"/>
</dbReference>
<dbReference type="HAMAP" id="MF_00295">
    <property type="entry name" value="MetA_acyltransf"/>
    <property type="match status" value="1"/>
</dbReference>
<dbReference type="InterPro" id="IPR029062">
    <property type="entry name" value="Class_I_gatase-like"/>
</dbReference>
<dbReference type="InterPro" id="IPR005697">
    <property type="entry name" value="HST_MetA"/>
</dbReference>
<dbReference type="InterPro" id="IPR033752">
    <property type="entry name" value="MetA_family"/>
</dbReference>
<dbReference type="NCBIfam" id="TIGR01001">
    <property type="entry name" value="metA"/>
    <property type="match status" value="1"/>
</dbReference>
<dbReference type="PANTHER" id="PTHR20919">
    <property type="entry name" value="HOMOSERINE O-SUCCINYLTRANSFERASE"/>
    <property type="match status" value="1"/>
</dbReference>
<dbReference type="PANTHER" id="PTHR20919:SF0">
    <property type="entry name" value="HOMOSERINE O-SUCCINYLTRANSFERASE"/>
    <property type="match status" value="1"/>
</dbReference>
<dbReference type="Pfam" id="PF04204">
    <property type="entry name" value="HTS"/>
    <property type="match status" value="1"/>
</dbReference>
<dbReference type="PIRSF" id="PIRSF000450">
    <property type="entry name" value="H_ser_succinyltr"/>
    <property type="match status" value="1"/>
</dbReference>
<dbReference type="SUPFAM" id="SSF52317">
    <property type="entry name" value="Class I glutamine amidotransferase-like"/>
    <property type="match status" value="1"/>
</dbReference>